<dbReference type="EC" id="1.8.-.-" evidence="8"/>
<dbReference type="EMBL" id="EQ963480">
    <property type="protein sequence ID" value="EED49414.1"/>
    <property type="molecule type" value="Genomic_DNA"/>
</dbReference>
<dbReference type="RefSeq" id="XP_002381315.1">
    <property type="nucleotide sequence ID" value="XM_002381274.1"/>
</dbReference>
<dbReference type="SMR" id="B8NM63"/>
<dbReference type="STRING" id="332952.B8NM63"/>
<dbReference type="GlyCosmos" id="B8NM63">
    <property type="glycosylation" value="7 sites, No reported glycans"/>
</dbReference>
<dbReference type="EnsemblFungi" id="EED49414">
    <property type="protein sequence ID" value="EED49414"/>
    <property type="gene ID" value="AFLA_094950"/>
</dbReference>
<dbReference type="VEuPathDB" id="FungiDB:AFLA_009732"/>
<dbReference type="eggNOG" id="KOG1399">
    <property type="taxonomic scope" value="Eukaryota"/>
</dbReference>
<dbReference type="HOGENOM" id="CLU_006909_3_0_1"/>
<dbReference type="OMA" id="ADPPALM"/>
<dbReference type="GO" id="GO:0050660">
    <property type="term" value="F:flavin adenine dinucleotide binding"/>
    <property type="evidence" value="ECO:0007669"/>
    <property type="project" value="InterPro"/>
</dbReference>
<dbReference type="GO" id="GO:0004499">
    <property type="term" value="F:N,N-dimethylaniline monooxygenase activity"/>
    <property type="evidence" value="ECO:0007669"/>
    <property type="project" value="InterPro"/>
</dbReference>
<dbReference type="GO" id="GO:0050661">
    <property type="term" value="F:NADP binding"/>
    <property type="evidence" value="ECO:0007669"/>
    <property type="project" value="InterPro"/>
</dbReference>
<dbReference type="Gene3D" id="3.50.50.60">
    <property type="entry name" value="FAD/NAD(P)-binding domain"/>
    <property type="match status" value="3"/>
</dbReference>
<dbReference type="InterPro" id="IPR036188">
    <property type="entry name" value="FAD/NAD-bd_sf"/>
</dbReference>
<dbReference type="InterPro" id="IPR000960">
    <property type="entry name" value="Flavin_mOase"/>
</dbReference>
<dbReference type="InterPro" id="IPR020946">
    <property type="entry name" value="Flavin_mOase-like"/>
</dbReference>
<dbReference type="InterPro" id="IPR050346">
    <property type="entry name" value="FMO-like"/>
</dbReference>
<dbReference type="PANTHER" id="PTHR23023">
    <property type="entry name" value="DIMETHYLANILINE MONOOXYGENASE"/>
    <property type="match status" value="1"/>
</dbReference>
<dbReference type="Pfam" id="PF00743">
    <property type="entry name" value="FMO-like"/>
    <property type="match status" value="1"/>
</dbReference>
<dbReference type="PIRSF" id="PIRSF000332">
    <property type="entry name" value="FMO"/>
    <property type="match status" value="1"/>
</dbReference>
<dbReference type="PRINTS" id="PR00370">
    <property type="entry name" value="FMOXYGENASE"/>
</dbReference>
<dbReference type="SUPFAM" id="SSF51905">
    <property type="entry name" value="FAD/NAD(P)-binding domain"/>
    <property type="match status" value="2"/>
</dbReference>
<name>USTF1_ASPFN</name>
<reference key="1">
    <citation type="journal article" date="2015" name="Genome Announc.">
        <title>Genome sequence of Aspergillus flavus NRRL 3357, a strain that causes aflatoxin contamination of food and feed.</title>
        <authorList>
            <person name="Nierman W.C."/>
            <person name="Yu J."/>
            <person name="Fedorova-Abrams N.D."/>
            <person name="Losada L."/>
            <person name="Cleveland T.E."/>
            <person name="Bhatnagar D."/>
            <person name="Bennett J.W."/>
            <person name="Dean R."/>
            <person name="Payne G.A."/>
        </authorList>
    </citation>
    <scope>NUCLEOTIDE SEQUENCE [LARGE SCALE GENOMIC DNA]</scope>
    <source>
        <strain>ATCC 200026 / FGSC A1120 / IAM 13836 / NRRL 3357 / JCM 12722 / SRRC 167</strain>
    </source>
</reference>
<reference key="2">
    <citation type="journal article" date="2014" name="Fungal Genet. Biol.">
        <title>Characterization of the biosynthetic gene cluster for the ribosomally synthesized cyclic peptide ustiloxin B in Aspergillus flavus.</title>
        <authorList>
            <person name="Umemura M."/>
            <person name="Nagano N."/>
            <person name="Koike H."/>
            <person name="Kawano J."/>
            <person name="Ishii T."/>
            <person name="Miyamura Y."/>
            <person name="Kikuchi M."/>
            <person name="Tamano K."/>
            <person name="Yu J."/>
            <person name="Shin-ya K."/>
            <person name="Machida M."/>
        </authorList>
    </citation>
    <scope>FUNCTION</scope>
    <scope>DISRUPTION PHENOTYPE</scope>
</reference>
<reference key="3">
    <citation type="journal article" date="2016" name="Angew. Chem. Int. Ed.">
        <title>Unveiling the biosynthetic pathway of the ribosomally synthesized and post-translationally modified peptide ustiloxin B in filamentous fungi.</title>
        <authorList>
            <person name="Ye Y."/>
            <person name="Minami A."/>
            <person name="Igarashi Y."/>
            <person name="Izumikawa M."/>
            <person name="Umemura M."/>
            <person name="Nagano N."/>
            <person name="Machida M."/>
            <person name="Kawahara T."/>
            <person name="Shin-Ya K."/>
            <person name="Gomi K."/>
            <person name="Oikawa H."/>
        </authorList>
    </citation>
    <scope>FUNCTION</scope>
    <scope>DISRUPTION PHENOTYPE</scope>
    <scope>CATALYTIC ACTIVITY</scope>
</reference>
<reference key="4">
    <citation type="journal article" date="2016" name="Fungal Genet. Biol.">
        <title>Class of cyclic ribosomal peptide synthetic genes in filamentous fungi.</title>
        <authorList>
            <person name="Nagano N."/>
            <person name="Umemura M."/>
            <person name="Izumikawa M."/>
            <person name="Kawano J."/>
            <person name="Ishii T."/>
            <person name="Kikuchi M."/>
            <person name="Tomii K."/>
            <person name="Kumagai T."/>
            <person name="Yoshimi A."/>
            <person name="Machida M."/>
            <person name="Abe K."/>
            <person name="Shin-ya K."/>
            <person name="Asai K."/>
        </authorList>
    </citation>
    <scope>FUNCTION</scope>
    <scope>DISRUPTION PHENOTYPE</scope>
</reference>
<feature type="signal peptide" evidence="1">
    <location>
        <begin position="1"/>
        <end position="22"/>
    </location>
</feature>
<feature type="chain" id="PRO_0000437298" description="Flavin-containing monooxygenase ustF1">
    <location>
        <begin position="23"/>
        <end position="398"/>
    </location>
</feature>
<feature type="binding site" evidence="1">
    <location>
        <begin position="13"/>
        <end position="18"/>
    </location>
    <ligand>
        <name>FAD</name>
        <dbReference type="ChEBI" id="CHEBI:57692"/>
    </ligand>
</feature>
<feature type="binding site" evidence="1">
    <location>
        <begin position="194"/>
        <end position="199"/>
    </location>
    <ligand>
        <name>NADP(+)</name>
        <dbReference type="ChEBI" id="CHEBI:58349"/>
    </ligand>
</feature>
<feature type="glycosylation site" description="N-linked (GlcNAc...) asparagine" evidence="2">
    <location>
        <position position="53"/>
    </location>
</feature>
<feature type="glycosylation site" description="N-linked (GlcNAc...) asparagine" evidence="2">
    <location>
        <position position="57"/>
    </location>
</feature>
<feature type="glycosylation site" description="N-linked (GlcNAc...) asparagine" evidence="2">
    <location>
        <position position="119"/>
    </location>
</feature>
<feature type="glycosylation site" description="N-linked (GlcNAc...) asparagine" evidence="2">
    <location>
        <position position="126"/>
    </location>
</feature>
<feature type="glycosylation site" description="N-linked (GlcNAc...) asparagine" evidence="2">
    <location>
        <position position="236"/>
    </location>
</feature>
<feature type="glycosylation site" description="N-linked (GlcNAc...) asparagine" evidence="2">
    <location>
        <position position="243"/>
    </location>
</feature>
<feature type="glycosylation site" description="N-linked (GlcNAc...) asparagine" evidence="2">
    <location>
        <position position="271"/>
    </location>
</feature>
<sequence>MTVSQVRRVAVIGAGISGVVSTAHLVAAGFEVTVFERNQQTGGICINRPCYKNLTTNVSTPLMRIKLRAWPENTPDFVHHSVVNEYIRDIALSTGVDERTIYGARVEHVYKDGGKWHVNWSVLDDNGSIDGLEERRLISTFDAVVVASGHYHSPHIPDIPGLSEVKKRWPSRVIHSKRYRTPEVYRDENVLMIGGGVSSMDISRDLGPFAKMIFQSTRNGDADPPALMLPDNADANDTILVTNGTQVHNIHRDIFYIPDPTLAFVGIPYFNTTFTLFEFQAIAVTAVWSRTACLPSTTEMRREYLVKQKQTGGGRKFHSLKDKEKEYVRDLMAWINDGRNAHGLVPIEGHTAAWFEAMDKLWDEARAAMKERKEQQEKIIKRIPFSADCTSVELPHLN</sequence>
<accession>B8NM63</accession>
<comment type="function">
    <text evidence="3 4 5">Flavin-containing monooxygenase; part of the gene cluster that mediates the biosynthesis of the secondary metabolite ustiloxin B, an antimitotic tetrapeptide (PubMed:24841822, PubMed:26703898, PubMed:27166860). First, ustA is processed by the subtilisin-like endoprotease Kex2 that is outside the ustiloxin B gene cluster, at the C-terminal side of Arg-Lys, after transfer to Golgi apparatus through the endoplasmic reticulum (ER) (PubMed:24841822). Cleavage by KEX2 generates 16 peptides YAIG-I to YAIG-XVI (PubMed:24841822). To process the precursor peptide further, at least two peptidases are necessary to cleave the N-terminal and C-terminal sides of the Tyr-Ala-Ile-Gly core peptide which serves as backbone for the synthesis of ustiloxin B, through cyclization and modification of the tyrosine with a non-protein coding amino acid, norvaline (PubMed:24841822). One of the two peptidases must be the serine peptidase ustP; and the other pepdidase is probably ustH (PubMed:24841822). Macrocyclization of the core peptide derived from ustA requires the tyrosinase ustQ, as well as the homologous oxidases ustYa and ustYb, and leads to the production of the first cyclization product N-desmethylustiloxin F (PubMed:26703898, PubMed:27166860). For the formation of N-desmethylustiloxin F, three oxidation steps are required, hydroxylation at the benzylic position, hydroxylation at either the aromatic ring of Tyr or beta-position of Ile, and oxidative cyclization (PubMed:27166860). UstQ may catalyze the oxidation of a phenol moiety, whereas the ustYa and ustYb are most likely responsible for the remaining two-step oxidations (PubMed:27166860). N-desmethylustiloxin F is then methylated by ustM to yield ustiloxin F which in turn substrate of the cytochrome P450 monooxygenase ustC which catalyzes the formation of S-deoxyustiloxin H (PubMed:27166860). The flavoprotein monooxygenases ustF1 and ustF2 then participate in the modification of the side chain of S-deoxyustiloxin H, leading to the synthesis of an oxime intermediate, via ustiloxin H (PubMed:27166860). Finally, carboxylative dehydration performed by the cysteine desulfurase-like protein ustD yields ustiloxin B (PubMed:27166860).</text>
</comment>
<comment type="pathway">
    <text evidence="5">Mycotoxin biosynthesis.</text>
</comment>
<comment type="disruption phenotype">
    <text evidence="3 4 5">Impairs the production of ustiloxin B but accumulates intermediates such as ustiloxin F and C (PubMed:24841822, PubMed:26703898, PubMed:27166860).</text>
</comment>
<comment type="similarity">
    <text evidence="7">Belongs to the FMO family.</text>
</comment>
<keyword id="KW-0274">FAD</keyword>
<keyword id="KW-0285">Flavoprotein</keyword>
<keyword id="KW-0325">Glycoprotein</keyword>
<keyword id="KW-0503">Monooxygenase</keyword>
<keyword id="KW-0521">NADP</keyword>
<keyword id="KW-0560">Oxidoreductase</keyword>
<keyword id="KW-0732">Signal</keyword>
<protein>
    <recommendedName>
        <fullName evidence="6">Flavin-containing monooxygenase ustF1</fullName>
        <ecNumber evidence="8">1.8.-.-</ecNumber>
    </recommendedName>
    <alternativeName>
        <fullName evidence="6">Ustiloxin B biosynthesis protein F1</fullName>
    </alternativeName>
</protein>
<organism>
    <name type="scientific">Aspergillus flavus (strain ATCC 200026 / FGSC A1120 / IAM 13836 / NRRL 3357 / JCM 12722 / SRRC 167)</name>
    <dbReference type="NCBI Taxonomy" id="332952"/>
    <lineage>
        <taxon>Eukaryota</taxon>
        <taxon>Fungi</taxon>
        <taxon>Dikarya</taxon>
        <taxon>Ascomycota</taxon>
        <taxon>Pezizomycotina</taxon>
        <taxon>Eurotiomycetes</taxon>
        <taxon>Eurotiomycetidae</taxon>
        <taxon>Eurotiales</taxon>
        <taxon>Aspergillaceae</taxon>
        <taxon>Aspergillus</taxon>
        <taxon>Aspergillus subgen. Circumdati</taxon>
    </lineage>
</organism>
<evidence type="ECO:0000255" key="1"/>
<evidence type="ECO:0000255" key="2">
    <source>
        <dbReference type="PROSITE-ProRule" id="PRU00498"/>
    </source>
</evidence>
<evidence type="ECO:0000269" key="3">
    <source>
    </source>
</evidence>
<evidence type="ECO:0000269" key="4">
    <source>
    </source>
</evidence>
<evidence type="ECO:0000269" key="5">
    <source>
    </source>
</evidence>
<evidence type="ECO:0000303" key="6">
    <source>
    </source>
</evidence>
<evidence type="ECO:0000305" key="7"/>
<evidence type="ECO:0000305" key="8">
    <source>
    </source>
</evidence>
<gene>
    <name evidence="6" type="primary">ustF1</name>
    <name type="ORF">AFLA_094950</name>
</gene>
<proteinExistence type="evidence at protein level"/>